<dbReference type="EC" id="1.3.5.6" evidence="5"/>
<dbReference type="EMBL" id="U38550">
    <property type="protein sequence ID" value="AAA91161.1"/>
    <property type="molecule type" value="mRNA"/>
</dbReference>
<dbReference type="EMBL" id="AF121947">
    <property type="protein sequence ID" value="AAF85796.1"/>
    <property type="molecule type" value="Genomic_DNA"/>
</dbReference>
<dbReference type="EMBL" id="AC009465">
    <property type="protein sequence ID" value="AAG51402.1"/>
    <property type="molecule type" value="Genomic_DNA"/>
</dbReference>
<dbReference type="EMBL" id="CP002686">
    <property type="protein sequence ID" value="AEE74148.1"/>
    <property type="molecule type" value="Genomic_DNA"/>
</dbReference>
<dbReference type="EMBL" id="CP002686">
    <property type="protein sequence ID" value="AEE74149.1"/>
    <property type="molecule type" value="Genomic_DNA"/>
</dbReference>
<dbReference type="EMBL" id="CP002686">
    <property type="protein sequence ID" value="ANM64503.1"/>
    <property type="molecule type" value="Genomic_DNA"/>
</dbReference>
<dbReference type="EMBL" id="CP002686">
    <property type="protein sequence ID" value="ANM64504.1"/>
    <property type="molecule type" value="Genomic_DNA"/>
</dbReference>
<dbReference type="EMBL" id="AY059920">
    <property type="protein sequence ID" value="AAL24402.1"/>
    <property type="molecule type" value="mRNA"/>
</dbReference>
<dbReference type="EMBL" id="AY072096">
    <property type="protein sequence ID" value="AAL59918.1"/>
    <property type="molecule type" value="mRNA"/>
</dbReference>
<dbReference type="EMBL" id="AY096583">
    <property type="protein sequence ID" value="AAM20233.1"/>
    <property type="molecule type" value="mRNA"/>
</dbReference>
<dbReference type="EMBL" id="AY086144">
    <property type="protein sequence ID" value="AAM63349.1"/>
    <property type="molecule type" value="mRNA"/>
</dbReference>
<dbReference type="RefSeq" id="NP_001319473.1">
    <property type="nucleotide sequence ID" value="NM_001337544.1"/>
</dbReference>
<dbReference type="RefSeq" id="NP_001319474.1">
    <property type="nucleotide sequence ID" value="NM_001337545.1"/>
</dbReference>
<dbReference type="RefSeq" id="NP_187138.1">
    <property type="nucleotide sequence ID" value="NM_111359.4"/>
</dbReference>
<dbReference type="RefSeq" id="NP_974222.1">
    <property type="nucleotide sequence ID" value="NM_202493.3"/>
</dbReference>
<dbReference type="SMR" id="Q38893"/>
<dbReference type="BioGRID" id="4982">
    <property type="interactions" value="1"/>
</dbReference>
<dbReference type="FunCoup" id="Q38893">
    <property type="interactions" value="783"/>
</dbReference>
<dbReference type="IntAct" id="Q38893">
    <property type="interactions" value="2"/>
</dbReference>
<dbReference type="STRING" id="3702.Q38893"/>
<dbReference type="PaxDb" id="3702-AT3G04870.2"/>
<dbReference type="ProteomicsDB" id="242927"/>
<dbReference type="DNASU" id="819647"/>
<dbReference type="EnsemblPlants" id="AT3G04870.1">
    <property type="protein sequence ID" value="AT3G04870.1"/>
    <property type="gene ID" value="AT3G04870"/>
</dbReference>
<dbReference type="EnsemblPlants" id="AT3G04870.2">
    <property type="protein sequence ID" value="AT3G04870.2"/>
    <property type="gene ID" value="AT3G04870"/>
</dbReference>
<dbReference type="EnsemblPlants" id="AT3G04870.3">
    <property type="protein sequence ID" value="AT3G04870.3"/>
    <property type="gene ID" value="AT3G04870"/>
</dbReference>
<dbReference type="EnsemblPlants" id="AT3G04870.4">
    <property type="protein sequence ID" value="AT3G04870.4"/>
    <property type="gene ID" value="AT3G04870"/>
</dbReference>
<dbReference type="GeneID" id="819647"/>
<dbReference type="Gramene" id="AT3G04870.1">
    <property type="protein sequence ID" value="AT3G04870.1"/>
    <property type="gene ID" value="AT3G04870"/>
</dbReference>
<dbReference type="Gramene" id="AT3G04870.2">
    <property type="protein sequence ID" value="AT3G04870.2"/>
    <property type="gene ID" value="AT3G04870"/>
</dbReference>
<dbReference type="Gramene" id="AT3G04870.3">
    <property type="protein sequence ID" value="AT3G04870.3"/>
    <property type="gene ID" value="AT3G04870"/>
</dbReference>
<dbReference type="Gramene" id="AT3G04870.4">
    <property type="protein sequence ID" value="AT3G04870.4"/>
    <property type="gene ID" value="AT3G04870"/>
</dbReference>
<dbReference type="KEGG" id="ath:AT3G04870"/>
<dbReference type="Araport" id="AT3G04870"/>
<dbReference type="TAIR" id="AT3G04870">
    <property type="gene designation" value="ZDS"/>
</dbReference>
<dbReference type="eggNOG" id="KOG0029">
    <property type="taxonomic scope" value="Eukaryota"/>
</dbReference>
<dbReference type="HOGENOM" id="CLU_022687_1_1_1"/>
<dbReference type="InParanoid" id="Q38893"/>
<dbReference type="OMA" id="LNMTWYS"/>
<dbReference type="PhylomeDB" id="Q38893"/>
<dbReference type="BioCyc" id="ARA:AT3G04870-MONOMER"/>
<dbReference type="BioCyc" id="MetaCyc:AT3G04870-MONOMER"/>
<dbReference type="UniPathway" id="UPA00803"/>
<dbReference type="PRO" id="PR:Q38893"/>
<dbReference type="Proteomes" id="UP000006548">
    <property type="component" value="Chromosome 3"/>
</dbReference>
<dbReference type="ExpressionAtlas" id="Q38893">
    <property type="expression patterns" value="baseline and differential"/>
</dbReference>
<dbReference type="GO" id="GO:0009507">
    <property type="term" value="C:chloroplast"/>
    <property type="evidence" value="ECO:0007005"/>
    <property type="project" value="TAIR"/>
</dbReference>
<dbReference type="GO" id="GO:0009941">
    <property type="term" value="C:chloroplast envelope"/>
    <property type="evidence" value="ECO:0007005"/>
    <property type="project" value="TAIR"/>
</dbReference>
<dbReference type="GO" id="GO:0009509">
    <property type="term" value="C:chromoplast"/>
    <property type="evidence" value="ECO:0007669"/>
    <property type="project" value="UniProtKB-SubCell"/>
</dbReference>
<dbReference type="GO" id="GO:0016719">
    <property type="term" value="F:9,9'-di-cis-zeta-carotene desaturase activity"/>
    <property type="evidence" value="ECO:0000314"/>
    <property type="project" value="UniProtKB"/>
</dbReference>
<dbReference type="GO" id="GO:0052889">
    <property type="term" value="P:9,9'-di-cis-zeta-carotene desaturation to 7,9,7',9'-tetra-cis-lycopene"/>
    <property type="evidence" value="ECO:0000314"/>
    <property type="project" value="UniProtKB"/>
</dbReference>
<dbReference type="GO" id="GO:0016117">
    <property type="term" value="P:carotenoid biosynthetic process"/>
    <property type="evidence" value="ECO:0000315"/>
    <property type="project" value="UniProtKB"/>
</dbReference>
<dbReference type="GO" id="GO:1901177">
    <property type="term" value="P:lycopene biosynthetic process"/>
    <property type="evidence" value="ECO:0000314"/>
    <property type="project" value="UniProtKB"/>
</dbReference>
<dbReference type="FunFam" id="3.50.50.60:FF:000111">
    <property type="entry name" value="Zeta-carotene desaturase"/>
    <property type="match status" value="1"/>
</dbReference>
<dbReference type="Gene3D" id="3.50.50.60">
    <property type="entry name" value="FAD/NAD(P)-binding domain"/>
    <property type="match status" value="1"/>
</dbReference>
<dbReference type="InterPro" id="IPR002937">
    <property type="entry name" value="Amino_oxidase"/>
</dbReference>
<dbReference type="InterPro" id="IPR036188">
    <property type="entry name" value="FAD/NAD-bd_sf"/>
</dbReference>
<dbReference type="InterPro" id="IPR014103">
    <property type="entry name" value="Zeta_caro_desat"/>
</dbReference>
<dbReference type="InterPro" id="IPR050464">
    <property type="entry name" value="Zeta_carotene_desat/Oxidored"/>
</dbReference>
<dbReference type="NCBIfam" id="TIGR02732">
    <property type="entry name" value="zeta_caro_desat"/>
    <property type="match status" value="1"/>
</dbReference>
<dbReference type="PANTHER" id="PTHR42923">
    <property type="entry name" value="PROTOPORPHYRINOGEN OXIDASE"/>
    <property type="match status" value="1"/>
</dbReference>
<dbReference type="PANTHER" id="PTHR42923:SF41">
    <property type="entry name" value="ZETA-CAROTENE DESATURASE, CHLOROPLASTIC_CHROMOPLASTIC"/>
    <property type="match status" value="1"/>
</dbReference>
<dbReference type="Pfam" id="PF01593">
    <property type="entry name" value="Amino_oxidase"/>
    <property type="match status" value="1"/>
</dbReference>
<dbReference type="PRINTS" id="PR00419">
    <property type="entry name" value="ADXRDTASE"/>
</dbReference>
<dbReference type="SUPFAM" id="SSF51905">
    <property type="entry name" value="FAD/NAD(P)-binding domain"/>
    <property type="match status" value="1"/>
</dbReference>
<protein>
    <recommendedName>
        <fullName evidence="9">Zeta-carotene desaturase, chloroplastic/chromoplastic</fullName>
        <ecNumber evidence="5">1.3.5.6</ecNumber>
    </recommendedName>
    <alternativeName>
        <fullName evidence="9">9,9'-di-cis-zeta-carotene desaturase</fullName>
    </alternativeName>
    <alternativeName>
        <fullName evidence="9">Carotene 7,8-desaturase</fullName>
    </alternativeName>
    <alternativeName>
        <fullName evidence="7">Protein CHLOROPLAST BIOGENESIS 5</fullName>
    </alternativeName>
    <alternativeName>
        <fullName evidence="9">Protein PIGMENT DEFECTIVE 181</fullName>
    </alternativeName>
    <alternativeName>
        <fullName evidence="6">Protein SPONTANEOUS CELL DEATH 1</fullName>
    </alternativeName>
</protein>
<organism>
    <name type="scientific">Arabidopsis thaliana</name>
    <name type="common">Mouse-ear cress</name>
    <dbReference type="NCBI Taxonomy" id="3702"/>
    <lineage>
        <taxon>Eukaryota</taxon>
        <taxon>Viridiplantae</taxon>
        <taxon>Streptophyta</taxon>
        <taxon>Embryophyta</taxon>
        <taxon>Tracheophyta</taxon>
        <taxon>Spermatophyta</taxon>
        <taxon>Magnoliopsida</taxon>
        <taxon>eudicotyledons</taxon>
        <taxon>Gunneridae</taxon>
        <taxon>Pentapetalae</taxon>
        <taxon>rosids</taxon>
        <taxon>malvids</taxon>
        <taxon>Brassicales</taxon>
        <taxon>Brassicaceae</taxon>
        <taxon>Camelineae</taxon>
        <taxon>Arabidopsis</taxon>
    </lineage>
</organism>
<reference key="1">
    <citation type="online journal article" date="1995" name="Plant Gene Register">
        <title>Nucleotide sequence of zeta-carotene desaturase from Arabidopsis.</title>
        <authorList>
            <person name="Scolnik P.A."/>
            <person name="Bartley G.E."/>
        </authorList>
        <locator>PGR95-111</locator>
    </citation>
    <scope>NUCLEOTIDE SEQUENCE [MRNA]</scope>
    <source>
        <strain>cv. Columbia</strain>
    </source>
</reference>
<reference key="2">
    <citation type="submission" date="1999-01" db="EMBL/GenBank/DDBJ databases">
        <title>Gene structure and regulation of the carotenoid biosynthetic pathway in Arabidopsis.</title>
        <authorList>
            <person name="Giuliano G."/>
            <person name="Rosati C."/>
            <person name="Santangelo G."/>
        </authorList>
    </citation>
    <scope>NUCLEOTIDE SEQUENCE [GENOMIC DNA]</scope>
</reference>
<reference key="3">
    <citation type="journal article" date="2000" name="Nature">
        <title>Sequence and analysis of chromosome 3 of the plant Arabidopsis thaliana.</title>
        <authorList>
            <person name="Salanoubat M."/>
            <person name="Lemcke K."/>
            <person name="Rieger M."/>
            <person name="Ansorge W."/>
            <person name="Unseld M."/>
            <person name="Fartmann B."/>
            <person name="Valle G."/>
            <person name="Bloecker H."/>
            <person name="Perez-Alonso M."/>
            <person name="Obermaier B."/>
            <person name="Delseny M."/>
            <person name="Boutry M."/>
            <person name="Grivell L.A."/>
            <person name="Mache R."/>
            <person name="Puigdomenech P."/>
            <person name="De Simone V."/>
            <person name="Choisne N."/>
            <person name="Artiguenave F."/>
            <person name="Robert C."/>
            <person name="Brottier P."/>
            <person name="Wincker P."/>
            <person name="Cattolico L."/>
            <person name="Weissenbach J."/>
            <person name="Saurin W."/>
            <person name="Quetier F."/>
            <person name="Schaefer M."/>
            <person name="Mueller-Auer S."/>
            <person name="Gabel C."/>
            <person name="Fuchs M."/>
            <person name="Benes V."/>
            <person name="Wurmbach E."/>
            <person name="Drzonek H."/>
            <person name="Erfle H."/>
            <person name="Jordan N."/>
            <person name="Bangert S."/>
            <person name="Wiedelmann R."/>
            <person name="Kranz H."/>
            <person name="Voss H."/>
            <person name="Holland R."/>
            <person name="Brandt P."/>
            <person name="Nyakatura G."/>
            <person name="Vezzi A."/>
            <person name="D'Angelo M."/>
            <person name="Pallavicini A."/>
            <person name="Toppo S."/>
            <person name="Simionati B."/>
            <person name="Conrad A."/>
            <person name="Hornischer K."/>
            <person name="Kauer G."/>
            <person name="Loehnert T.-H."/>
            <person name="Nordsiek G."/>
            <person name="Reichelt J."/>
            <person name="Scharfe M."/>
            <person name="Schoen O."/>
            <person name="Bargues M."/>
            <person name="Terol J."/>
            <person name="Climent J."/>
            <person name="Navarro P."/>
            <person name="Collado C."/>
            <person name="Perez-Perez A."/>
            <person name="Ottenwaelder B."/>
            <person name="Duchemin D."/>
            <person name="Cooke R."/>
            <person name="Laudie M."/>
            <person name="Berger-Llauro C."/>
            <person name="Purnelle B."/>
            <person name="Masuy D."/>
            <person name="de Haan M."/>
            <person name="Maarse A.C."/>
            <person name="Alcaraz J.-P."/>
            <person name="Cottet A."/>
            <person name="Casacuberta E."/>
            <person name="Monfort A."/>
            <person name="Argiriou A."/>
            <person name="Flores M."/>
            <person name="Liguori R."/>
            <person name="Vitale D."/>
            <person name="Mannhaupt G."/>
            <person name="Haase D."/>
            <person name="Schoof H."/>
            <person name="Rudd S."/>
            <person name="Zaccaria P."/>
            <person name="Mewes H.-W."/>
            <person name="Mayer K.F.X."/>
            <person name="Kaul S."/>
            <person name="Town C.D."/>
            <person name="Koo H.L."/>
            <person name="Tallon L.J."/>
            <person name="Jenkins J."/>
            <person name="Rooney T."/>
            <person name="Rizzo M."/>
            <person name="Walts A."/>
            <person name="Utterback T."/>
            <person name="Fujii C.Y."/>
            <person name="Shea T.P."/>
            <person name="Creasy T.H."/>
            <person name="Haas B."/>
            <person name="Maiti R."/>
            <person name="Wu D."/>
            <person name="Peterson J."/>
            <person name="Van Aken S."/>
            <person name="Pai G."/>
            <person name="Militscher J."/>
            <person name="Sellers P."/>
            <person name="Gill J.E."/>
            <person name="Feldblyum T.V."/>
            <person name="Preuss D."/>
            <person name="Lin X."/>
            <person name="Nierman W.C."/>
            <person name="Salzberg S.L."/>
            <person name="White O."/>
            <person name="Venter J.C."/>
            <person name="Fraser C.M."/>
            <person name="Kaneko T."/>
            <person name="Nakamura Y."/>
            <person name="Sato S."/>
            <person name="Kato T."/>
            <person name="Asamizu E."/>
            <person name="Sasamoto S."/>
            <person name="Kimura T."/>
            <person name="Idesawa K."/>
            <person name="Kawashima K."/>
            <person name="Kishida Y."/>
            <person name="Kiyokawa C."/>
            <person name="Kohara M."/>
            <person name="Matsumoto M."/>
            <person name="Matsuno A."/>
            <person name="Muraki A."/>
            <person name="Nakayama S."/>
            <person name="Nakazaki N."/>
            <person name="Shinpo S."/>
            <person name="Takeuchi C."/>
            <person name="Wada T."/>
            <person name="Watanabe A."/>
            <person name="Yamada M."/>
            <person name="Yasuda M."/>
            <person name="Tabata S."/>
        </authorList>
    </citation>
    <scope>NUCLEOTIDE SEQUENCE [LARGE SCALE GENOMIC DNA]</scope>
    <source>
        <strain>cv. Columbia</strain>
    </source>
</reference>
<reference key="4">
    <citation type="journal article" date="2017" name="Plant J.">
        <title>Araport11: a complete reannotation of the Arabidopsis thaliana reference genome.</title>
        <authorList>
            <person name="Cheng C.Y."/>
            <person name="Krishnakumar V."/>
            <person name="Chan A.P."/>
            <person name="Thibaud-Nissen F."/>
            <person name="Schobel S."/>
            <person name="Town C.D."/>
        </authorList>
    </citation>
    <scope>GENOME REANNOTATION</scope>
    <source>
        <strain>cv. Columbia</strain>
    </source>
</reference>
<reference key="5">
    <citation type="journal article" date="2003" name="Science">
        <title>Empirical analysis of transcriptional activity in the Arabidopsis genome.</title>
        <authorList>
            <person name="Yamada K."/>
            <person name="Lim J."/>
            <person name="Dale J.M."/>
            <person name="Chen H."/>
            <person name="Shinn P."/>
            <person name="Palm C.J."/>
            <person name="Southwick A.M."/>
            <person name="Wu H.C."/>
            <person name="Kim C.J."/>
            <person name="Nguyen M."/>
            <person name="Pham P.K."/>
            <person name="Cheuk R.F."/>
            <person name="Karlin-Newmann G."/>
            <person name="Liu S.X."/>
            <person name="Lam B."/>
            <person name="Sakano H."/>
            <person name="Wu T."/>
            <person name="Yu G."/>
            <person name="Miranda M."/>
            <person name="Quach H.L."/>
            <person name="Tripp M."/>
            <person name="Chang C.H."/>
            <person name="Lee J.M."/>
            <person name="Toriumi M.J."/>
            <person name="Chan M.M."/>
            <person name="Tang C.C."/>
            <person name="Onodera C.S."/>
            <person name="Deng J.M."/>
            <person name="Akiyama K."/>
            <person name="Ansari Y."/>
            <person name="Arakawa T."/>
            <person name="Banh J."/>
            <person name="Banno F."/>
            <person name="Bowser L."/>
            <person name="Brooks S.Y."/>
            <person name="Carninci P."/>
            <person name="Chao Q."/>
            <person name="Choy N."/>
            <person name="Enju A."/>
            <person name="Goldsmith A.D."/>
            <person name="Gurjal M."/>
            <person name="Hansen N.F."/>
            <person name="Hayashizaki Y."/>
            <person name="Johnson-Hopson C."/>
            <person name="Hsuan V.W."/>
            <person name="Iida K."/>
            <person name="Karnes M."/>
            <person name="Khan S."/>
            <person name="Koesema E."/>
            <person name="Ishida J."/>
            <person name="Jiang P.X."/>
            <person name="Jones T."/>
            <person name="Kawai J."/>
            <person name="Kamiya A."/>
            <person name="Meyers C."/>
            <person name="Nakajima M."/>
            <person name="Narusaka M."/>
            <person name="Seki M."/>
            <person name="Sakurai T."/>
            <person name="Satou M."/>
            <person name="Tamse R."/>
            <person name="Vaysberg M."/>
            <person name="Wallender E.K."/>
            <person name="Wong C."/>
            <person name="Yamamura Y."/>
            <person name="Yuan S."/>
            <person name="Shinozaki K."/>
            <person name="Davis R.W."/>
            <person name="Theologis A."/>
            <person name="Ecker J.R."/>
        </authorList>
    </citation>
    <scope>NUCLEOTIDE SEQUENCE [LARGE SCALE MRNA]</scope>
    <source>
        <strain>cv. Columbia</strain>
    </source>
</reference>
<reference key="6">
    <citation type="submission" date="2002-03" db="EMBL/GenBank/DDBJ databases">
        <title>Full-length cDNA from Arabidopsis thaliana.</title>
        <authorList>
            <person name="Brover V.V."/>
            <person name="Troukhan M.E."/>
            <person name="Alexandrov N.A."/>
            <person name="Lu Y.-P."/>
            <person name="Flavell R.B."/>
            <person name="Feldmann K.A."/>
        </authorList>
    </citation>
    <scope>NUCLEOTIDE SEQUENCE [LARGE SCALE MRNA]</scope>
</reference>
<reference key="7">
    <citation type="journal article" date="1999" name="Eur. J. Biochem.">
        <title>Two Arabidopsis thaliana carotene desaturases, phytoene desaturase and zeta-carotene desaturase, expressed in Escherichia coli, catalyze a poly-cis pathway to yield pro-lycopene.</title>
        <authorList>
            <person name="Bartley G.E."/>
            <person name="Scolnik P.A."/>
            <person name="Beyer P."/>
        </authorList>
    </citation>
    <scope>FUNCTION</scope>
    <scope>CATALYTIC ACTIVITY</scope>
</reference>
<reference key="8">
    <citation type="journal article" date="2007" name="Cell Res.">
        <title>The Arabidopsis Spontaneous Cell Death1 gene, encoding a zeta-carotene desaturase essential for carotenoid biosynthesis, is involved in chloroplast development, photoprotection and retrograde signalling.</title>
        <authorList>
            <person name="Dong H."/>
            <person name="Deng Y."/>
            <person name="Mu J."/>
            <person name="Lu Q."/>
            <person name="Wang Y."/>
            <person name="Xu Y."/>
            <person name="Chu C."/>
            <person name="Chong K."/>
            <person name="Lu C."/>
            <person name="Zuo J."/>
        </authorList>
    </citation>
    <scope>FUNCTION</scope>
    <scope>TISSUE SPECIFICITY</scope>
    <scope>DISRUPTION PHENOTYPE</scope>
</reference>
<reference key="9">
    <citation type="journal article" date="2014" name="Plant Cell">
        <title>An uncharacterized apocarotenoid-derived signal generated in zeta-carotene desaturase mutants regulates leaf development and the expression of chloroplast and nuclear genes in Arabidopsis.</title>
        <authorList>
            <person name="Avendano-Vazquez A.O."/>
            <person name="Cordoba E."/>
            <person name="Llamas E."/>
            <person name="San Roman C."/>
            <person name="Nisar N."/>
            <person name="De la Torre S."/>
            <person name="Ramos-Vega M."/>
            <person name="Gutierrez-Nava M.D."/>
            <person name="Cazzonelli C.I."/>
            <person name="Pogson B.J."/>
            <person name="Leon P."/>
        </authorList>
    </citation>
    <scope>FUNCTION</scope>
    <scope>DISRUPTION PHENOTYPE</scope>
</reference>
<comment type="function">
    <text evidence="3 4 5">Plays a crucial role in plant growth and development. Is essential for the biosynthesis of carotenoids. Carotenoids are involved in different physiological processes, including coloration, photoprotection, biosynthesis of abscisic acid (ABA) and chloroplast biogenesis (PubMed:17468780, PubMed:24907342). Catalyzes the conversion of zeta-carotene to lycopene via the intermediary of neurosporene. It carries out two consecutive desaturations (introduction of double bonds) at positions C-7 and C-7'. Shows stereoselectivity toward trans C15-C15'zeta-carotene double bond. The zeta-carotene produced by the phytoene desaturase PDS has a C15-C15' double bond in the cis configuration and it requires isomerization before being recognized as substrate by ZDS. The main product is 7,9,7',9'-tetra-cis-lycopene (pro-lycopene) (PubMed:9914519).</text>
</comment>
<comment type="catalytic activity">
    <reaction evidence="5">
        <text>9,9'-di-cis-zeta-carotene + 2 a quinone = 7,7',9,9'-tetra-cis-lycopene + 2 a quinol</text>
        <dbReference type="Rhea" id="RHEA:30955"/>
        <dbReference type="ChEBI" id="CHEBI:24646"/>
        <dbReference type="ChEBI" id="CHEBI:48716"/>
        <dbReference type="ChEBI" id="CHEBI:62466"/>
        <dbReference type="ChEBI" id="CHEBI:132124"/>
        <dbReference type="EC" id="1.3.5.6"/>
    </reaction>
</comment>
<comment type="cofactor">
    <cofactor evidence="1">
        <name>decylplastoquinone</name>
        <dbReference type="ChEBI" id="CHEBI:72953"/>
    </cofactor>
    <cofactor evidence="1">
        <name>6-decylubiquinone</name>
        <dbReference type="ChEBI" id="CHEBI:52020"/>
    </cofactor>
    <text evidence="1">Lipophilic quinones such as decyl-plastoquinone or decyl-ubiquinone.</text>
</comment>
<comment type="pathway">
    <text evidence="9">Carotenoid biosynthesis; lycopene biosynthesis.</text>
</comment>
<comment type="subcellular location">
    <subcellularLocation>
        <location>Plastid</location>
        <location>Chloroplast</location>
    </subcellularLocation>
    <subcellularLocation>
        <location evidence="9">Plastid</location>
        <location evidence="9">Chromoplast</location>
    </subcellularLocation>
</comment>
<comment type="tissue specificity">
    <text evidence="3">Highly expressed in leaves. Expressed at low levels in flowers and siliques.</text>
</comment>
<comment type="disruption phenotype">
    <text evidence="3 4">Albino seedling due to defect in pigmentation, growth arrest shortly after germination, altered leaf development, and seedling lethality.</text>
</comment>
<comment type="similarity">
    <text evidence="9">Belongs to the zeta carotene desaturase family.</text>
</comment>
<proteinExistence type="evidence at protein level"/>
<keyword id="KW-0125">Carotenoid biosynthesis</keyword>
<keyword id="KW-0150">Chloroplast</keyword>
<keyword id="KW-0957">Chromoplast</keyword>
<keyword id="KW-0560">Oxidoreductase</keyword>
<keyword id="KW-0934">Plastid</keyword>
<keyword id="KW-1185">Reference proteome</keyword>
<keyword id="KW-0809">Transit peptide</keyword>
<gene>
    <name evidence="9" type="primary">ZDS1</name>
    <name evidence="7" type="synonym">CLB5</name>
    <name evidence="9" type="synonym">PDE181</name>
    <name evidence="6" type="synonym">SPC1</name>
    <name evidence="8" type="synonym">ZDS</name>
    <name evidence="10" type="ordered locus">At3g04870</name>
    <name evidence="11" type="ORF">T9J14.18</name>
</gene>
<sequence length="558" mass="61634">MASSVVFAATGSLSVPPLKSRRFYVNSSLDSDVSDMSVNAPKGLFPPEPVPYKGPKLKVAIIGAGLAGMSTAVELLDQGHEVDIYDSRTFIGGKVGSFVDRRGNHIEMGLHVFFGCYNNLFRLMKKVGAEKNLLVKDHTHTFINKDGTIGELDFRFPVGAPIHGIRAFLVTNQLKPYDKLRNSLALALSPVVKALVDPDGAMRDIRNLDSISFSDWFLSKGGTRASIQRMWDPVAYALGFIDCDNMSARCMLTIFSLFATKTEASLLRMLKGSPDVYLSGPIKQYITDRGGRIHLRWGCREILYDKSADGETYVTGLAISKATNKKIVKADVYVAACDVPGIKRLLPKEWRESRFFNDIYELEGVPVVTVQLRYNGWVTELQDIELARQLKRAVGLDNLLYTPDADFSCFADLALASPADYYIEGQGTLLQCVLTPGDPYMRMPNDKIIEKVAMQVTELFPSSRGLEVTWSSVVKIAQSLYREAPGKDPFRPDQKTPIKNFFLAGSYTKQDYIDSMEGATLSGRQASSYICDAGEELAELNKKLSSSATAVPDELSLV</sequence>
<feature type="transit peptide" description="Chloroplast and chromoplast" evidence="2">
    <location>
        <begin position="1"/>
        <end position="27"/>
    </location>
</feature>
<feature type="chain" id="PRO_0000041605" description="Zeta-carotene desaturase, chloroplastic/chromoplastic">
    <location>
        <begin position="28"/>
        <end position="558"/>
    </location>
</feature>
<feature type="sequence conflict" description="In Ref. 1; AAA91161." evidence="9" ref="1">
    <original>A</original>
    <variation>P</variation>
    <location>
        <position position="9"/>
    </location>
</feature>
<feature type="sequence conflict" description="In Ref. 6; AAM63349." evidence="9" ref="6">
    <original>S</original>
    <variation>F</variation>
    <location>
        <position position="12"/>
    </location>
</feature>
<feature type="sequence conflict" description="In Ref. 1; AAA91161." evidence="9" ref="1">
    <original>G</original>
    <variation>A</variation>
    <location>
        <position position="93"/>
    </location>
</feature>
<feature type="sequence conflict" description="In Ref. 1; AAA91161." evidence="9" ref="1">
    <original>N</original>
    <variation>S</variation>
    <location>
        <position position="172"/>
    </location>
</feature>
<feature type="sequence conflict" description="In Ref. 1; AAA91161 and 2; AAF85796." evidence="9" ref="1 2">
    <original>V</original>
    <variation>G</variation>
    <location>
        <position position="370"/>
    </location>
</feature>
<feature type="sequence conflict" description="In Ref. 1; AAA91161." evidence="9" ref="1">
    <original>S</original>
    <variation>P</variation>
    <location>
        <position position="463"/>
    </location>
</feature>
<feature type="sequence conflict" description="In Ref. 1; AAA91161 and 2; AAF85796." evidence="9" ref="1 2">
    <original>W</original>
    <variation>C</variation>
    <location>
        <position position="470"/>
    </location>
</feature>
<accession>Q38893</accession>
<accession>A0A1I9LPJ6</accession>
<accession>Q8LD88</accession>
<accession>Q93YN2</accession>
<accession>Q9CAV3</accession>
<accession>Q9LLY1</accession>
<name>ZDS_ARATH</name>
<evidence type="ECO:0000250" key="1"/>
<evidence type="ECO:0000255" key="2"/>
<evidence type="ECO:0000269" key="3">
    <source>
    </source>
</evidence>
<evidence type="ECO:0000269" key="4">
    <source>
    </source>
</evidence>
<evidence type="ECO:0000269" key="5">
    <source>
    </source>
</evidence>
<evidence type="ECO:0000303" key="6">
    <source>
    </source>
</evidence>
<evidence type="ECO:0000303" key="7">
    <source>
    </source>
</evidence>
<evidence type="ECO:0000303" key="8">
    <source ref="1"/>
</evidence>
<evidence type="ECO:0000305" key="9"/>
<evidence type="ECO:0000312" key="10">
    <source>
        <dbReference type="Araport" id="AT3G04870"/>
    </source>
</evidence>
<evidence type="ECO:0000312" key="11">
    <source>
        <dbReference type="EMBL" id="AAG51402.1"/>
    </source>
</evidence>